<dbReference type="EMBL" id="AL123456">
    <property type="protein sequence ID" value="CCP45074.1"/>
    <property type="molecule type" value="Genomic_DNA"/>
</dbReference>
<dbReference type="PIR" id="H70732">
    <property type="entry name" value="H70732"/>
</dbReference>
<dbReference type="RefSeq" id="NP_216808.1">
    <property type="nucleotide sequence ID" value="NC_000962.3"/>
</dbReference>
<dbReference type="RefSeq" id="WP_003411731.1">
    <property type="nucleotide sequence ID" value="NZ_NVQJ01000012.1"/>
</dbReference>
<dbReference type="SMR" id="P9WLE3"/>
<dbReference type="STRING" id="83332.Rv2292c"/>
<dbReference type="PaxDb" id="83332-Rv2292c"/>
<dbReference type="DNASU" id="888805"/>
<dbReference type="GeneID" id="888805"/>
<dbReference type="KEGG" id="mtu:Rv2292c"/>
<dbReference type="KEGG" id="mtv:RVBD_2292c"/>
<dbReference type="TubercuList" id="Rv2292c"/>
<dbReference type="eggNOG" id="COG0775">
    <property type="taxonomic scope" value="Bacteria"/>
</dbReference>
<dbReference type="InParanoid" id="P9WLE3"/>
<dbReference type="OrthoDB" id="4750424at2"/>
<dbReference type="Proteomes" id="UP000001584">
    <property type="component" value="Chromosome"/>
</dbReference>
<dbReference type="GO" id="GO:0003824">
    <property type="term" value="F:catalytic activity"/>
    <property type="evidence" value="ECO:0007669"/>
    <property type="project" value="InterPro"/>
</dbReference>
<dbReference type="GO" id="GO:0009116">
    <property type="term" value="P:nucleoside metabolic process"/>
    <property type="evidence" value="ECO:0007669"/>
    <property type="project" value="InterPro"/>
</dbReference>
<dbReference type="Gene3D" id="3.40.50.1580">
    <property type="entry name" value="Nucleoside phosphorylase domain"/>
    <property type="match status" value="1"/>
</dbReference>
<dbReference type="InterPro" id="IPR000845">
    <property type="entry name" value="Nucleoside_phosphorylase_d"/>
</dbReference>
<dbReference type="InterPro" id="IPR035994">
    <property type="entry name" value="Nucleoside_phosphorylase_sf"/>
</dbReference>
<dbReference type="Pfam" id="PF01048">
    <property type="entry name" value="PNP_UDP_1"/>
    <property type="match status" value="1"/>
</dbReference>
<dbReference type="SUPFAM" id="SSF53167">
    <property type="entry name" value="Purine and uridine phosphorylases"/>
    <property type="match status" value="1"/>
</dbReference>
<feature type="signal peptide" evidence="1">
    <location>
        <begin position="1"/>
        <end position="19"/>
    </location>
</feature>
<feature type="chain" id="PRO_0000014128" description="Uncharacterized protein Rv2292c">
    <location>
        <begin position="20"/>
        <end position="74"/>
    </location>
</feature>
<reference key="1">
    <citation type="journal article" date="1998" name="Nature">
        <title>Deciphering the biology of Mycobacterium tuberculosis from the complete genome sequence.</title>
        <authorList>
            <person name="Cole S.T."/>
            <person name="Brosch R."/>
            <person name="Parkhill J."/>
            <person name="Garnier T."/>
            <person name="Churcher C.M."/>
            <person name="Harris D.E."/>
            <person name="Gordon S.V."/>
            <person name="Eiglmeier K."/>
            <person name="Gas S."/>
            <person name="Barry C.E. III"/>
            <person name="Tekaia F."/>
            <person name="Badcock K."/>
            <person name="Basham D."/>
            <person name="Brown D."/>
            <person name="Chillingworth T."/>
            <person name="Connor R."/>
            <person name="Davies R.M."/>
            <person name="Devlin K."/>
            <person name="Feltwell T."/>
            <person name="Gentles S."/>
            <person name="Hamlin N."/>
            <person name="Holroyd S."/>
            <person name="Hornsby T."/>
            <person name="Jagels K."/>
            <person name="Krogh A."/>
            <person name="McLean J."/>
            <person name="Moule S."/>
            <person name="Murphy L.D."/>
            <person name="Oliver S."/>
            <person name="Osborne J."/>
            <person name="Quail M.A."/>
            <person name="Rajandream M.A."/>
            <person name="Rogers J."/>
            <person name="Rutter S."/>
            <person name="Seeger K."/>
            <person name="Skelton S."/>
            <person name="Squares S."/>
            <person name="Squares R."/>
            <person name="Sulston J.E."/>
            <person name="Taylor K."/>
            <person name="Whitehead S."/>
            <person name="Barrell B.G."/>
        </authorList>
    </citation>
    <scope>NUCLEOTIDE SEQUENCE [LARGE SCALE GENOMIC DNA]</scope>
    <source>
        <strain>ATCC 25618 / H37Rv</strain>
    </source>
</reference>
<gene>
    <name type="ordered locus">Rv2292c</name>
    <name type="ORF">MTCY339.18</name>
</gene>
<accession>P9WLE3</accession>
<accession>L0T969</accession>
<accession>P64977</accession>
<accession>Q50674</accession>
<organism>
    <name type="scientific">Mycobacterium tuberculosis (strain ATCC 25618 / H37Rv)</name>
    <dbReference type="NCBI Taxonomy" id="83332"/>
    <lineage>
        <taxon>Bacteria</taxon>
        <taxon>Bacillati</taxon>
        <taxon>Actinomycetota</taxon>
        <taxon>Actinomycetes</taxon>
        <taxon>Mycobacteriales</taxon>
        <taxon>Mycobacteriaceae</taxon>
        <taxon>Mycobacterium</taxon>
        <taxon>Mycobacterium tuberculosis complex</taxon>
    </lineage>
</organism>
<sequence>MNPGFDAVDQETAAAQAVADAHGVPFLGIRGMSDGPGDPLHLPGFPVQFFVYKQIAANNAARVTEAFLQNWAGV</sequence>
<evidence type="ECO:0000255" key="1"/>
<keyword id="KW-1185">Reference proteome</keyword>
<keyword id="KW-0732">Signal</keyword>
<protein>
    <recommendedName>
        <fullName>Uncharacterized protein Rv2292c</fullName>
    </recommendedName>
</protein>
<proteinExistence type="inferred from homology"/>
<name>Y2292_MYCTU</name>